<gene>
    <name evidence="1" type="primary">lutB</name>
    <name type="ordered locus">BCE_1417</name>
</gene>
<accession>Q73BK1</accession>
<comment type="function">
    <text evidence="1">Is involved in L-lactate degradation and allows cells to grow with lactate as the sole carbon source. Has probably a role as an electron transporter during oxidation of L-lactate.</text>
</comment>
<comment type="similarity">
    <text evidence="1">Belongs to the LutB/YkgF family.</text>
</comment>
<evidence type="ECO:0000255" key="1">
    <source>
        <dbReference type="HAMAP-Rule" id="MF_02103"/>
    </source>
</evidence>
<sequence>MSMKISEKKFNDRVGDGIQDSFMRGAVSSAQTRLYTNRLKAADELGNWEEWRELGEEIRQHTLENLDYYLMQLSENVSKRGGHVYFAKTKEEAAKYIQDVAKKKQAKKVVKSKSMVTEEISMNHALEEIGCEVLESDLGEYILQVDNDPPSHIIAPALHKNRTQIRDVFKEKLGYENSDDPYEMTKFVRKQLREKFMDAEIGVTGCNFAVANTGSLCLVTNEGNADLVMSIPKTQIAVMGMERMVPTMEELDVLVGLLCRSAVGQKLTSYVTVAGPIQEEEVDGPEEFHLVVVDNGRSQILGSEFRQVLQCIRCAACVNVCPVYRHVGGHSYGSIYSGPIGAVLTPLLGGYDDYKELPYASSLCGACTEACPVKIPLHDLLLKHRQVIVEQEGRAPLAEKLAMKMFSMGASSAALYKMGSKMAPAAMSPFTSGNRVSKGVGPLKNWTDIREFPAPSKERFRDWYKDHKKGGDK</sequence>
<name>LUTB_BACC1</name>
<keyword id="KW-0004">4Fe-4S</keyword>
<keyword id="KW-0249">Electron transport</keyword>
<keyword id="KW-0408">Iron</keyword>
<keyword id="KW-0411">Iron-sulfur</keyword>
<keyword id="KW-0479">Metal-binding</keyword>
<keyword id="KW-0677">Repeat</keyword>
<keyword id="KW-0813">Transport</keyword>
<protein>
    <recommendedName>
        <fullName evidence="1">Lactate utilization protein B</fullName>
    </recommendedName>
</protein>
<reference key="1">
    <citation type="journal article" date="2004" name="Nucleic Acids Res.">
        <title>The genome sequence of Bacillus cereus ATCC 10987 reveals metabolic adaptations and a large plasmid related to Bacillus anthracis pXO1.</title>
        <authorList>
            <person name="Rasko D.A."/>
            <person name="Ravel J."/>
            <person name="Oekstad O.A."/>
            <person name="Helgason E."/>
            <person name="Cer R.Z."/>
            <person name="Jiang L."/>
            <person name="Shores K.A."/>
            <person name="Fouts D.E."/>
            <person name="Tourasse N.J."/>
            <person name="Angiuoli S.V."/>
            <person name="Kolonay J.F."/>
            <person name="Nelson W.C."/>
            <person name="Kolstoe A.-B."/>
            <person name="Fraser C.M."/>
            <person name="Read T.D."/>
        </authorList>
    </citation>
    <scope>NUCLEOTIDE SEQUENCE [LARGE SCALE GENOMIC DNA]</scope>
    <source>
        <strain>ATCC 10987 / NRS 248</strain>
    </source>
</reference>
<feature type="chain" id="PRO_0000383964" description="Lactate utilization protein B">
    <location>
        <begin position="1"/>
        <end position="473"/>
    </location>
</feature>
<feature type="domain" description="4Fe-4S ferredoxin-type 1" evidence="1">
    <location>
        <begin position="302"/>
        <end position="332"/>
    </location>
</feature>
<feature type="domain" description="4Fe-4S ferredoxin-type 2" evidence="1">
    <location>
        <begin position="351"/>
        <end position="380"/>
    </location>
</feature>
<feature type="binding site" evidence="1">
    <location>
        <position position="311"/>
    </location>
    <ligand>
        <name>[4Fe-4S] cluster</name>
        <dbReference type="ChEBI" id="CHEBI:49883"/>
        <label>1</label>
    </ligand>
</feature>
<feature type="binding site" evidence="1">
    <location>
        <position position="314"/>
    </location>
    <ligand>
        <name>[4Fe-4S] cluster</name>
        <dbReference type="ChEBI" id="CHEBI:49883"/>
        <label>1</label>
    </ligand>
</feature>
<feature type="binding site" evidence="1">
    <location>
        <position position="317"/>
    </location>
    <ligand>
        <name>[4Fe-4S] cluster</name>
        <dbReference type="ChEBI" id="CHEBI:49883"/>
        <label>1</label>
    </ligand>
</feature>
<feature type="binding site" evidence="1">
    <location>
        <position position="321"/>
    </location>
    <ligand>
        <name>[4Fe-4S] cluster</name>
        <dbReference type="ChEBI" id="CHEBI:49883"/>
        <label>2</label>
    </ligand>
</feature>
<feature type="binding site" evidence="1">
    <location>
        <position position="364"/>
    </location>
    <ligand>
        <name>[4Fe-4S] cluster</name>
        <dbReference type="ChEBI" id="CHEBI:49883"/>
        <label>2</label>
    </ligand>
</feature>
<feature type="binding site" evidence="1">
    <location>
        <position position="367"/>
    </location>
    <ligand>
        <name>[4Fe-4S] cluster</name>
        <dbReference type="ChEBI" id="CHEBI:49883"/>
        <label>2</label>
    </ligand>
</feature>
<feature type="binding site" evidence="1">
    <location>
        <position position="371"/>
    </location>
    <ligand>
        <name>[4Fe-4S] cluster</name>
        <dbReference type="ChEBI" id="CHEBI:49883"/>
        <label>1</label>
    </ligand>
</feature>
<organism>
    <name type="scientific">Bacillus cereus (strain ATCC 10987 / NRS 248)</name>
    <dbReference type="NCBI Taxonomy" id="222523"/>
    <lineage>
        <taxon>Bacteria</taxon>
        <taxon>Bacillati</taxon>
        <taxon>Bacillota</taxon>
        <taxon>Bacilli</taxon>
        <taxon>Bacillales</taxon>
        <taxon>Bacillaceae</taxon>
        <taxon>Bacillus</taxon>
        <taxon>Bacillus cereus group</taxon>
    </lineage>
</organism>
<proteinExistence type="inferred from homology"/>
<dbReference type="EMBL" id="AE017194">
    <property type="protein sequence ID" value="AAS40346.1"/>
    <property type="molecule type" value="Genomic_DNA"/>
</dbReference>
<dbReference type="DNASU" id="2748567"/>
<dbReference type="KEGG" id="bca:BCE_1417"/>
<dbReference type="HOGENOM" id="CLU_027059_2_0_9"/>
<dbReference type="Proteomes" id="UP000002527">
    <property type="component" value="Chromosome"/>
</dbReference>
<dbReference type="GO" id="GO:0051539">
    <property type="term" value="F:4 iron, 4 sulfur cluster binding"/>
    <property type="evidence" value="ECO:0007669"/>
    <property type="project" value="UniProtKB-KW"/>
</dbReference>
<dbReference type="GO" id="GO:0046872">
    <property type="term" value="F:metal ion binding"/>
    <property type="evidence" value="ECO:0007669"/>
    <property type="project" value="UniProtKB-KW"/>
</dbReference>
<dbReference type="GO" id="GO:0006089">
    <property type="term" value="P:lactate metabolic process"/>
    <property type="evidence" value="ECO:0007669"/>
    <property type="project" value="UniProtKB-UniRule"/>
</dbReference>
<dbReference type="Gene3D" id="1.10.1060.10">
    <property type="entry name" value="Alpha-helical ferredoxin"/>
    <property type="match status" value="1"/>
</dbReference>
<dbReference type="Gene3D" id="3.40.50.10420">
    <property type="entry name" value="NagB/RpiA/CoA transferase-like"/>
    <property type="match status" value="1"/>
</dbReference>
<dbReference type="HAMAP" id="MF_02103">
    <property type="entry name" value="LutB"/>
    <property type="match status" value="1"/>
</dbReference>
<dbReference type="InterPro" id="IPR017896">
    <property type="entry name" value="4Fe4S_Fe-S-bd"/>
</dbReference>
<dbReference type="InterPro" id="IPR017900">
    <property type="entry name" value="4Fe4S_Fe_S_CS"/>
</dbReference>
<dbReference type="InterPro" id="IPR024185">
    <property type="entry name" value="FTHF_cligase-like_sf"/>
</dbReference>
<dbReference type="InterPro" id="IPR009051">
    <property type="entry name" value="Helical_ferredxn"/>
</dbReference>
<dbReference type="InterPro" id="IPR003741">
    <property type="entry name" value="LUD_dom"/>
</dbReference>
<dbReference type="InterPro" id="IPR022825">
    <property type="entry name" value="LutB"/>
</dbReference>
<dbReference type="InterPro" id="IPR004452">
    <property type="entry name" value="LutB/LldF"/>
</dbReference>
<dbReference type="InterPro" id="IPR024569">
    <property type="entry name" value="LutB_C"/>
</dbReference>
<dbReference type="InterPro" id="IPR037171">
    <property type="entry name" value="NagB/RpiA_transferase-like"/>
</dbReference>
<dbReference type="NCBIfam" id="TIGR00273">
    <property type="entry name" value="LutB/LldF family L-lactate oxidation iron-sulfur protein"/>
    <property type="match status" value="1"/>
</dbReference>
<dbReference type="PANTHER" id="PTHR47153">
    <property type="entry name" value="LACTATE UTILIZATION PROTEIN B"/>
    <property type="match status" value="1"/>
</dbReference>
<dbReference type="PANTHER" id="PTHR47153:SF2">
    <property type="entry name" value="LACTATE UTILIZATION PROTEIN B"/>
    <property type="match status" value="1"/>
</dbReference>
<dbReference type="Pfam" id="PF13183">
    <property type="entry name" value="Fer4_8"/>
    <property type="match status" value="1"/>
</dbReference>
<dbReference type="Pfam" id="PF02589">
    <property type="entry name" value="LUD_dom"/>
    <property type="match status" value="1"/>
</dbReference>
<dbReference type="Pfam" id="PF11870">
    <property type="entry name" value="LutB_C"/>
    <property type="match status" value="1"/>
</dbReference>
<dbReference type="SUPFAM" id="SSF46548">
    <property type="entry name" value="alpha-helical ferredoxin"/>
    <property type="match status" value="1"/>
</dbReference>
<dbReference type="SUPFAM" id="SSF100950">
    <property type="entry name" value="NagB/RpiA/CoA transferase-like"/>
    <property type="match status" value="1"/>
</dbReference>
<dbReference type="PROSITE" id="PS00198">
    <property type="entry name" value="4FE4S_FER_1"/>
    <property type="match status" value="1"/>
</dbReference>